<sequence>MDKANGAYKTALKAASAVAPAEKFPVFQATFDKNLKEGLSGPDAVGFAKKLDAFIQTSYLSTKAAEPKEKFDLFVLSLTEVLRFMAGAVKAPPASKFPAKPAPKVAAYTPAAPAGAAPKATTDEQKLIEKINVGFKAAVAAAAGVPAASKYKTFVATFGAASNKAFAEALSTEPKGAAVASSKAVLTSKLDAAYKLAYKSAEGATPEAKYDAYVATLSEALRIIAGTLEVHGVKPAAEEVKAIPAGELQVIDKVDAAFKVAATAANAAPANDKFTVFEAAFNDAIKASTGGAYQSYKFIPALEAAVKQSYAATVATAPAVKYTVFETALKKAITAMSQAQKAAKPAAAVTGTATSAVGAATGAATAAAGGYKV</sequence>
<reference key="1">
    <citation type="journal article" date="1991" name="J. Biol. Chem.">
        <title>Nucleotide sequence analysis of three cDNAs coding for Poa p IX isoallergens of Kentucky bluegrass pollen.</title>
        <authorList>
            <person name="Silvanovich A."/>
            <person name="Astwood J."/>
            <person name="Zhang L."/>
            <person name="Olsen E."/>
            <person name="Kisil F.T."/>
            <person name="Sehon A.H."/>
            <person name="Mohapatra S.S."/>
            <person name="Hill R.D."/>
        </authorList>
    </citation>
    <scope>NUCLEOTIDE SEQUENCE [MRNA]</scope>
    <source>
        <tissue>Pollen</tissue>
    </source>
</reference>
<reference key="2">
    <citation type="journal article" date="1991" name="J. Immunol.">
        <title>Identification and characterization of the Poa p IX group of basic allergens of Kentucky bluegrass pollen.</title>
        <authorList>
            <person name="Olsen E."/>
            <person name="Zhang L."/>
            <person name="Hill R.D."/>
            <person name="Kisil F.T."/>
            <person name="Sehon A.H."/>
            <person name="Mohapatra S.S."/>
        </authorList>
    </citation>
    <scope>CHARACTERIZATION</scope>
</reference>
<accession>P22284</accession>
<feature type="signal peptide" evidence="1">
    <location>
        <begin position="1"/>
        <end position="28"/>
    </location>
</feature>
<feature type="chain" id="PRO_0000021747" description="Pollen allergen KBG 31">
    <location>
        <begin position="29"/>
        <end position="373"/>
    </location>
</feature>
<comment type="tissue specificity">
    <text>Pollen.</text>
</comment>
<comment type="allergen">
    <text>Causes an allergic reaction in human.</text>
</comment>
<comment type="miscellaneous">
    <text>Its C-terminus might be membrane-associated.</text>
</comment>
<comment type="similarity">
    <text evidence="2">Belongs to the Poa p IX/Phl p VI allergen family.</text>
</comment>
<dbReference type="EMBL" id="M38342">
    <property type="protein sequence ID" value="AAA63455.1"/>
    <property type="molecule type" value="mRNA"/>
</dbReference>
<dbReference type="PIR" id="C39098">
    <property type="entry name" value="C39098"/>
</dbReference>
<dbReference type="SMR" id="P22284"/>
<dbReference type="Allergome" id="581">
    <property type="allergen name" value="Poa p 5"/>
</dbReference>
<dbReference type="CDD" id="cd12805">
    <property type="entry name" value="Allergen_V_VI"/>
    <property type="match status" value="1"/>
</dbReference>
<dbReference type="Gene3D" id="1.20.120.320">
    <property type="entry name" value="Group V grass pollen allergen"/>
    <property type="match status" value="3"/>
</dbReference>
<dbReference type="InterPro" id="IPR002914">
    <property type="entry name" value="Poa_pIX/Phl_pVI"/>
</dbReference>
<dbReference type="InterPro" id="IPR035506">
    <property type="entry name" value="Pollen_allergen/Os"/>
</dbReference>
<dbReference type="Pfam" id="PF01620">
    <property type="entry name" value="Pollen_allerg_2"/>
    <property type="match status" value="2"/>
</dbReference>
<dbReference type="PRINTS" id="PR00833">
    <property type="entry name" value="POAALLERGEN"/>
</dbReference>
<dbReference type="SUPFAM" id="SSF81736">
    <property type="entry name" value="Group V grass pollen allergen"/>
    <property type="match status" value="3"/>
</dbReference>
<keyword id="KW-0020">Allergen</keyword>
<keyword id="KW-0732">Signal</keyword>
<proteinExistence type="evidence at protein level"/>
<evidence type="ECO:0000255" key="1"/>
<evidence type="ECO:0000305" key="2"/>
<name>MPA91_POAPR</name>
<protein>
    <recommendedName>
        <fullName>Pollen allergen KBG 31</fullName>
    </recommendedName>
    <alternativeName>
        <fullName>Allergen Poa p IX</fullName>
    </alternativeName>
    <alternativeName>
        <fullName>Pollen allergen Poa p 9</fullName>
    </alternativeName>
    <allergenName>Poa p 9</allergenName>
</protein>
<organism>
    <name type="scientific">Poa pratensis</name>
    <name type="common">Kentucky bluegrass</name>
    <name type="synonym">Phalaris japonica</name>
    <dbReference type="NCBI Taxonomy" id="4545"/>
    <lineage>
        <taxon>Eukaryota</taxon>
        <taxon>Viridiplantae</taxon>
        <taxon>Streptophyta</taxon>
        <taxon>Embryophyta</taxon>
        <taxon>Tracheophyta</taxon>
        <taxon>Spermatophyta</taxon>
        <taxon>Magnoliopsida</taxon>
        <taxon>Liliopsida</taxon>
        <taxon>Poales</taxon>
        <taxon>Poaceae</taxon>
        <taxon>BOP clade</taxon>
        <taxon>Pooideae</taxon>
        <taxon>Poodae</taxon>
        <taxon>Poeae</taxon>
        <taxon>Poeae Chloroplast Group 2 (Poeae type)</taxon>
        <taxon>Poodinae</taxon>
        <taxon>Poinae</taxon>
        <taxon>Poa</taxon>
    </lineage>
</organism>